<accession>P30163</accession>
<gene>
    <name type="primary">act-2b</name>
</gene>
<evidence type="ECO:0000250" key="1"/>
<evidence type="ECO:0000250" key="2">
    <source>
        <dbReference type="UniProtKB" id="P68137"/>
    </source>
</evidence>
<evidence type="ECO:0000305" key="3"/>
<reference key="1">
    <citation type="journal article" date="1992" name="Mol. Biochem. Parasitol.">
        <title>The actin genes of Onchocerca volvulus.</title>
        <authorList>
            <person name="Zeng W."/>
            <person name="Donelson J.E."/>
        </authorList>
    </citation>
    <scope>NUCLEOTIDE SEQUENCE [GENOMIC DNA]</scope>
</reference>
<keyword id="KW-0007">Acetylation</keyword>
<keyword id="KW-0067">ATP-binding</keyword>
<keyword id="KW-0963">Cytoplasm</keyword>
<keyword id="KW-0206">Cytoskeleton</keyword>
<keyword id="KW-0378">Hydrolase</keyword>
<keyword id="KW-0547">Nucleotide-binding</keyword>
<keyword id="KW-1185">Reference proteome</keyword>
<dbReference type="EC" id="3.6.4.-" evidence="2"/>
<dbReference type="EMBL" id="M84915">
    <property type="protein sequence ID" value="AAA29410.1"/>
    <property type="molecule type" value="Genomic_DNA"/>
</dbReference>
<dbReference type="SMR" id="P30163"/>
<dbReference type="STRING" id="6282.P30163"/>
<dbReference type="HOGENOM" id="CLU_027965_0_2_1"/>
<dbReference type="Proteomes" id="UP000024404">
    <property type="component" value="Unassembled WGS sequence"/>
</dbReference>
<dbReference type="GO" id="GO:0005737">
    <property type="term" value="C:cytoplasm"/>
    <property type="evidence" value="ECO:0007669"/>
    <property type="project" value="UniProtKB-KW"/>
</dbReference>
<dbReference type="GO" id="GO:0005856">
    <property type="term" value="C:cytoskeleton"/>
    <property type="evidence" value="ECO:0007669"/>
    <property type="project" value="UniProtKB-SubCell"/>
</dbReference>
<dbReference type="GO" id="GO:0005524">
    <property type="term" value="F:ATP binding"/>
    <property type="evidence" value="ECO:0007669"/>
    <property type="project" value="UniProtKB-KW"/>
</dbReference>
<dbReference type="GO" id="GO:0016787">
    <property type="term" value="F:hydrolase activity"/>
    <property type="evidence" value="ECO:0007669"/>
    <property type="project" value="UniProtKB-KW"/>
</dbReference>
<dbReference type="CDD" id="cd10224">
    <property type="entry name" value="ASKHA_NBD_actin"/>
    <property type="match status" value="1"/>
</dbReference>
<dbReference type="FunFam" id="2.30.36.70:FF:000001">
    <property type="entry name" value="Actin, alpha skeletal muscle"/>
    <property type="match status" value="1"/>
</dbReference>
<dbReference type="FunFam" id="3.30.420.40:FF:000131">
    <property type="entry name" value="Actin, alpha skeletal muscle"/>
    <property type="match status" value="1"/>
</dbReference>
<dbReference type="FunFam" id="3.30.420.40:FF:000291">
    <property type="entry name" value="Actin, alpha skeletal muscle"/>
    <property type="match status" value="1"/>
</dbReference>
<dbReference type="FunFam" id="3.90.640.10:FF:000047">
    <property type="entry name" value="Actin, alpha skeletal muscle"/>
    <property type="match status" value="1"/>
</dbReference>
<dbReference type="FunFam" id="3.30.420.40:FF:000058">
    <property type="entry name" value="Putative actin-related protein 5"/>
    <property type="match status" value="1"/>
</dbReference>
<dbReference type="Gene3D" id="3.30.420.40">
    <property type="match status" value="2"/>
</dbReference>
<dbReference type="Gene3D" id="3.90.640.10">
    <property type="entry name" value="Actin, Chain A, domain 4"/>
    <property type="match status" value="1"/>
</dbReference>
<dbReference type="InterPro" id="IPR004000">
    <property type="entry name" value="Actin"/>
</dbReference>
<dbReference type="InterPro" id="IPR020902">
    <property type="entry name" value="Actin/actin-like_CS"/>
</dbReference>
<dbReference type="InterPro" id="IPR004001">
    <property type="entry name" value="Actin_CS"/>
</dbReference>
<dbReference type="InterPro" id="IPR043129">
    <property type="entry name" value="ATPase_NBD"/>
</dbReference>
<dbReference type="PANTHER" id="PTHR11937">
    <property type="entry name" value="ACTIN"/>
    <property type="match status" value="1"/>
</dbReference>
<dbReference type="Pfam" id="PF00022">
    <property type="entry name" value="Actin"/>
    <property type="match status" value="1"/>
</dbReference>
<dbReference type="PRINTS" id="PR00190">
    <property type="entry name" value="ACTIN"/>
</dbReference>
<dbReference type="SMART" id="SM00268">
    <property type="entry name" value="ACTIN"/>
    <property type="match status" value="1"/>
</dbReference>
<dbReference type="SUPFAM" id="SSF53067">
    <property type="entry name" value="Actin-like ATPase domain"/>
    <property type="match status" value="2"/>
</dbReference>
<dbReference type="PROSITE" id="PS00406">
    <property type="entry name" value="ACTINS_1"/>
    <property type="match status" value="1"/>
</dbReference>
<dbReference type="PROSITE" id="PS00432">
    <property type="entry name" value="ACTINS_2"/>
    <property type="match status" value="1"/>
</dbReference>
<dbReference type="PROSITE" id="PS01132">
    <property type="entry name" value="ACTINS_ACT_LIKE"/>
    <property type="match status" value="1"/>
</dbReference>
<organism>
    <name type="scientific">Onchocerca volvulus</name>
    <dbReference type="NCBI Taxonomy" id="6282"/>
    <lineage>
        <taxon>Eukaryota</taxon>
        <taxon>Metazoa</taxon>
        <taxon>Ecdysozoa</taxon>
        <taxon>Nematoda</taxon>
        <taxon>Chromadorea</taxon>
        <taxon>Rhabditida</taxon>
        <taxon>Spirurina</taxon>
        <taxon>Spiruromorpha</taxon>
        <taxon>Filarioidea</taxon>
        <taxon>Onchocercidae</taxon>
        <taxon>Onchocerca</taxon>
    </lineage>
</organism>
<protein>
    <recommendedName>
        <fullName>Actin-2</fullName>
        <ecNumber evidence="2">3.6.4.-</ecNumber>
    </recommendedName>
</protein>
<sequence>MCDEEVAALVVDNGSGMCKAGFAGDDAPRAVFPSIVGRPRHQGVMVGMGQKDSYVGDEAQSKRGILTLKYPIEHGIVTNWDDMEKIWHHTFYNELRVAPEEHPVLLTEAPLNPKANREKMTQIMFETFNTPAMYVAIQAVLSLYASGRTTGIVLDSGDGVTHTVPIYEGYALPHAILRLDLAGRDLTDYLMKILTERGYSFTTTAEREIVRDIKEKLCYVALDFEQEMATAASSSSLEKSYELPDGQVITVGNERFRCPEALFQPSFLGMESAGIHETTYNSIMKCDIDIRKDLYANNVLSGGSTMYPGIADRMQKEITALAPSTMKIKIIAPPERKYSVWIGGSILASLSTFQQMWISKQEYDESGPSIVHRKCF</sequence>
<feature type="propeptide" id="PRO_0000000706" description="Removed in mature form" evidence="1">
    <location>
        <begin position="1"/>
        <end position="2"/>
    </location>
</feature>
<feature type="chain" id="PRO_0000000707" description="Actin-2">
    <location>
        <begin position="3"/>
        <end position="376"/>
    </location>
</feature>
<feature type="modified residue" description="N-acetylaspartate" evidence="1">
    <location>
        <position position="3"/>
    </location>
</feature>
<comment type="function">
    <text>Actins are highly conserved proteins that are involved in various types of cell motility and are ubiquitously expressed in all eukaryotic cells.</text>
</comment>
<comment type="catalytic activity">
    <reaction evidence="2">
        <text>ATP + H2O = ADP + phosphate + H(+)</text>
        <dbReference type="Rhea" id="RHEA:13065"/>
        <dbReference type="ChEBI" id="CHEBI:15377"/>
        <dbReference type="ChEBI" id="CHEBI:15378"/>
        <dbReference type="ChEBI" id="CHEBI:30616"/>
        <dbReference type="ChEBI" id="CHEBI:43474"/>
        <dbReference type="ChEBI" id="CHEBI:456216"/>
    </reaction>
</comment>
<comment type="subcellular location">
    <subcellularLocation>
        <location>Cytoplasm</location>
        <location>Cytoskeleton</location>
    </subcellularLocation>
</comment>
<comment type="similarity">
    <text evidence="3">Belongs to the actin family.</text>
</comment>
<name>ACT2_ONCVO</name>
<proteinExistence type="inferred from homology"/>